<proteinExistence type="inferred from homology"/>
<sequence length="176" mass="19073">MFKGTTIIAVRKGDKVSVAGDGQITFGENTILKHGAKKIRRLYNGEVIVGFAGSVADALTLSQKFEEKLEQYGGNLKRAAVELAQEWRKDKILRKLEALLIAVDKKDTLLISGTGEVIEPDEDVIGIGSGGNYAMAAALALRYNTDLDTEDIAKKALEIASKICVYTNNNITVETL</sequence>
<protein>
    <recommendedName>
        <fullName evidence="1">ATP-dependent protease subunit HslV</fullName>
        <ecNumber evidence="1">3.4.25.2</ecNumber>
    </recommendedName>
</protein>
<dbReference type="EC" id="3.4.25.2" evidence="1"/>
<dbReference type="EMBL" id="CP000924">
    <property type="protein sequence ID" value="ABY94917.1"/>
    <property type="molecule type" value="Genomic_DNA"/>
</dbReference>
<dbReference type="RefSeq" id="WP_003869177.1">
    <property type="nucleotide sequence ID" value="NC_010321.1"/>
</dbReference>
<dbReference type="SMR" id="B0K9V4"/>
<dbReference type="STRING" id="340099.Teth39_1263"/>
<dbReference type="MEROPS" id="T01.007"/>
<dbReference type="KEGG" id="tpd:Teth39_1263"/>
<dbReference type="eggNOG" id="COG5405">
    <property type="taxonomic scope" value="Bacteria"/>
</dbReference>
<dbReference type="HOGENOM" id="CLU_093872_1_1_9"/>
<dbReference type="Proteomes" id="UP000002156">
    <property type="component" value="Chromosome"/>
</dbReference>
<dbReference type="GO" id="GO:0009376">
    <property type="term" value="C:HslUV protease complex"/>
    <property type="evidence" value="ECO:0007669"/>
    <property type="project" value="UniProtKB-UniRule"/>
</dbReference>
<dbReference type="GO" id="GO:0005839">
    <property type="term" value="C:proteasome core complex"/>
    <property type="evidence" value="ECO:0007669"/>
    <property type="project" value="InterPro"/>
</dbReference>
<dbReference type="GO" id="GO:0046872">
    <property type="term" value="F:metal ion binding"/>
    <property type="evidence" value="ECO:0007669"/>
    <property type="project" value="UniProtKB-KW"/>
</dbReference>
<dbReference type="GO" id="GO:0004298">
    <property type="term" value="F:threonine-type endopeptidase activity"/>
    <property type="evidence" value="ECO:0007669"/>
    <property type="project" value="UniProtKB-KW"/>
</dbReference>
<dbReference type="GO" id="GO:0051603">
    <property type="term" value="P:proteolysis involved in protein catabolic process"/>
    <property type="evidence" value="ECO:0007669"/>
    <property type="project" value="InterPro"/>
</dbReference>
<dbReference type="CDD" id="cd01913">
    <property type="entry name" value="protease_HslV"/>
    <property type="match status" value="1"/>
</dbReference>
<dbReference type="Gene3D" id="3.60.20.10">
    <property type="entry name" value="Glutamine Phosphoribosylpyrophosphate, subunit 1, domain 1"/>
    <property type="match status" value="1"/>
</dbReference>
<dbReference type="HAMAP" id="MF_00248">
    <property type="entry name" value="HslV"/>
    <property type="match status" value="1"/>
</dbReference>
<dbReference type="InterPro" id="IPR022281">
    <property type="entry name" value="ATP-dep_Prtase_HsIV_su"/>
</dbReference>
<dbReference type="InterPro" id="IPR029055">
    <property type="entry name" value="Ntn_hydrolases_N"/>
</dbReference>
<dbReference type="InterPro" id="IPR001353">
    <property type="entry name" value="Proteasome_sua/b"/>
</dbReference>
<dbReference type="InterPro" id="IPR023333">
    <property type="entry name" value="Proteasome_suB-type"/>
</dbReference>
<dbReference type="NCBIfam" id="TIGR03692">
    <property type="entry name" value="ATP_dep_HslV"/>
    <property type="match status" value="1"/>
</dbReference>
<dbReference type="NCBIfam" id="NF003964">
    <property type="entry name" value="PRK05456.1"/>
    <property type="match status" value="1"/>
</dbReference>
<dbReference type="PANTHER" id="PTHR32194:SF0">
    <property type="entry name" value="ATP-DEPENDENT PROTEASE SUBUNIT HSLV"/>
    <property type="match status" value="1"/>
</dbReference>
<dbReference type="PANTHER" id="PTHR32194">
    <property type="entry name" value="METALLOPROTEASE TLDD"/>
    <property type="match status" value="1"/>
</dbReference>
<dbReference type="Pfam" id="PF00227">
    <property type="entry name" value="Proteasome"/>
    <property type="match status" value="1"/>
</dbReference>
<dbReference type="PIRSF" id="PIRSF039093">
    <property type="entry name" value="HslV"/>
    <property type="match status" value="1"/>
</dbReference>
<dbReference type="SUPFAM" id="SSF56235">
    <property type="entry name" value="N-terminal nucleophile aminohydrolases (Ntn hydrolases)"/>
    <property type="match status" value="1"/>
</dbReference>
<dbReference type="PROSITE" id="PS51476">
    <property type="entry name" value="PROTEASOME_BETA_2"/>
    <property type="match status" value="1"/>
</dbReference>
<accession>B0K9V4</accession>
<organism>
    <name type="scientific">Thermoanaerobacter pseudethanolicus (strain ATCC 33223 / 39E)</name>
    <name type="common">Clostridium thermohydrosulfuricum</name>
    <dbReference type="NCBI Taxonomy" id="340099"/>
    <lineage>
        <taxon>Bacteria</taxon>
        <taxon>Bacillati</taxon>
        <taxon>Bacillota</taxon>
        <taxon>Clostridia</taxon>
        <taxon>Thermoanaerobacterales</taxon>
        <taxon>Thermoanaerobacteraceae</taxon>
        <taxon>Thermoanaerobacter</taxon>
    </lineage>
</organism>
<reference key="1">
    <citation type="submission" date="2008-01" db="EMBL/GenBank/DDBJ databases">
        <title>Complete sequence of Thermoanaerobacter pseudethanolicus 39E.</title>
        <authorList>
            <person name="Copeland A."/>
            <person name="Lucas S."/>
            <person name="Lapidus A."/>
            <person name="Barry K."/>
            <person name="Glavina del Rio T."/>
            <person name="Dalin E."/>
            <person name="Tice H."/>
            <person name="Pitluck S."/>
            <person name="Bruce D."/>
            <person name="Goodwin L."/>
            <person name="Saunders E."/>
            <person name="Brettin T."/>
            <person name="Detter J.C."/>
            <person name="Han C."/>
            <person name="Schmutz J."/>
            <person name="Larimer F."/>
            <person name="Land M."/>
            <person name="Hauser L."/>
            <person name="Kyrpides N."/>
            <person name="Lykidis A."/>
            <person name="Hemme C."/>
            <person name="Fields M.W."/>
            <person name="He Z."/>
            <person name="Zhou J."/>
            <person name="Richardson P."/>
        </authorList>
    </citation>
    <scope>NUCLEOTIDE SEQUENCE [LARGE SCALE GENOMIC DNA]</scope>
    <source>
        <strain>ATCC 33223 / DSM 2355 / 39E</strain>
    </source>
</reference>
<keyword id="KW-0021">Allosteric enzyme</keyword>
<keyword id="KW-0963">Cytoplasm</keyword>
<keyword id="KW-0378">Hydrolase</keyword>
<keyword id="KW-0479">Metal-binding</keyword>
<keyword id="KW-0645">Protease</keyword>
<keyword id="KW-1185">Reference proteome</keyword>
<keyword id="KW-0915">Sodium</keyword>
<keyword id="KW-0888">Threonine protease</keyword>
<comment type="function">
    <text evidence="1">Protease subunit of a proteasome-like degradation complex believed to be a general protein degrading machinery.</text>
</comment>
<comment type="catalytic activity">
    <reaction evidence="1">
        <text>ATP-dependent cleavage of peptide bonds with broad specificity.</text>
        <dbReference type="EC" id="3.4.25.2"/>
    </reaction>
</comment>
<comment type="activity regulation">
    <text evidence="1">Allosterically activated by HslU binding.</text>
</comment>
<comment type="subunit">
    <text evidence="1">A double ring-shaped homohexamer of HslV is capped on each side by a ring-shaped HslU homohexamer. The assembly of the HslU/HslV complex is dependent on binding of ATP.</text>
</comment>
<comment type="subcellular location">
    <subcellularLocation>
        <location evidence="1">Cytoplasm</location>
    </subcellularLocation>
</comment>
<comment type="similarity">
    <text evidence="1">Belongs to the peptidase T1B family. HslV subfamily.</text>
</comment>
<feature type="chain" id="PRO_1000100921" description="ATP-dependent protease subunit HslV">
    <location>
        <begin position="1"/>
        <end position="176"/>
    </location>
</feature>
<feature type="active site" evidence="1">
    <location>
        <position position="5"/>
    </location>
</feature>
<feature type="binding site" evidence="1">
    <location>
        <position position="161"/>
    </location>
    <ligand>
        <name>Na(+)</name>
        <dbReference type="ChEBI" id="CHEBI:29101"/>
    </ligand>
</feature>
<feature type="binding site" evidence="1">
    <location>
        <position position="164"/>
    </location>
    <ligand>
        <name>Na(+)</name>
        <dbReference type="ChEBI" id="CHEBI:29101"/>
    </ligand>
</feature>
<feature type="binding site" evidence="1">
    <location>
        <position position="167"/>
    </location>
    <ligand>
        <name>Na(+)</name>
        <dbReference type="ChEBI" id="CHEBI:29101"/>
    </ligand>
</feature>
<evidence type="ECO:0000255" key="1">
    <source>
        <dbReference type="HAMAP-Rule" id="MF_00248"/>
    </source>
</evidence>
<gene>
    <name evidence="1" type="primary">hslV</name>
    <name type="ordered locus">Teth39_1263</name>
</gene>
<name>HSLV_THEP3</name>